<evidence type="ECO:0000250" key="1">
    <source>
        <dbReference type="UniProtKB" id="Q13362"/>
    </source>
</evidence>
<evidence type="ECO:0000256" key="2">
    <source>
        <dbReference type="SAM" id="MobiDB-lite"/>
    </source>
</evidence>
<evidence type="ECO:0000269" key="3">
    <source>
    </source>
</evidence>
<evidence type="ECO:0000305" key="4"/>
<protein>
    <recommendedName>
        <fullName>Serine/threonine protein phosphatase 2A 57 kDa regulatory subunit B' kappa isoform</fullName>
        <shortName>AtB' kappa</shortName>
        <shortName>PP2A, B' subunit, kappa isoform</shortName>
    </recommendedName>
</protein>
<proteinExistence type="evidence at protein level"/>
<name>2A5K_ARATH</name>
<keyword id="KW-0963">Cytoplasm</keyword>
<keyword id="KW-1185">Reference proteome</keyword>
<feature type="chain" id="PRO_0000071468" description="Serine/threonine protein phosphatase 2A 57 kDa regulatory subunit B' kappa isoform">
    <location>
        <begin position="1"/>
        <end position="500"/>
    </location>
</feature>
<feature type="region of interest" description="Disordered" evidence="2">
    <location>
        <begin position="1"/>
        <end position="53"/>
    </location>
</feature>
<feature type="compositionally biased region" description="Polar residues" evidence="2">
    <location>
        <begin position="21"/>
        <end position="37"/>
    </location>
</feature>
<accession>Q93YV6</accession>
<gene>
    <name type="primary">B'KAPPA</name>
    <name type="ordered locus">At5g25510</name>
    <name type="ORF">T14C9.50</name>
</gene>
<reference key="1">
    <citation type="journal article" date="2000" name="Nature">
        <title>Sequence and analysis of chromosome 5 of the plant Arabidopsis thaliana.</title>
        <authorList>
            <person name="Tabata S."/>
            <person name="Kaneko T."/>
            <person name="Nakamura Y."/>
            <person name="Kotani H."/>
            <person name="Kato T."/>
            <person name="Asamizu E."/>
            <person name="Miyajima N."/>
            <person name="Sasamoto S."/>
            <person name="Kimura T."/>
            <person name="Hosouchi T."/>
            <person name="Kawashima K."/>
            <person name="Kohara M."/>
            <person name="Matsumoto M."/>
            <person name="Matsuno A."/>
            <person name="Muraki A."/>
            <person name="Nakayama S."/>
            <person name="Nakazaki N."/>
            <person name="Naruo K."/>
            <person name="Okumura S."/>
            <person name="Shinpo S."/>
            <person name="Takeuchi C."/>
            <person name="Wada T."/>
            <person name="Watanabe A."/>
            <person name="Yamada M."/>
            <person name="Yasuda M."/>
            <person name="Sato S."/>
            <person name="de la Bastide M."/>
            <person name="Huang E."/>
            <person name="Spiegel L."/>
            <person name="Gnoj L."/>
            <person name="O'Shaughnessy A."/>
            <person name="Preston R."/>
            <person name="Habermann K."/>
            <person name="Murray J."/>
            <person name="Johnson D."/>
            <person name="Rohlfing T."/>
            <person name="Nelson J."/>
            <person name="Stoneking T."/>
            <person name="Pepin K."/>
            <person name="Spieth J."/>
            <person name="Sekhon M."/>
            <person name="Armstrong J."/>
            <person name="Becker M."/>
            <person name="Belter E."/>
            <person name="Cordum H."/>
            <person name="Cordes M."/>
            <person name="Courtney L."/>
            <person name="Courtney W."/>
            <person name="Dante M."/>
            <person name="Du H."/>
            <person name="Edwards J."/>
            <person name="Fryman J."/>
            <person name="Haakensen B."/>
            <person name="Lamar E."/>
            <person name="Latreille P."/>
            <person name="Leonard S."/>
            <person name="Meyer R."/>
            <person name="Mulvaney E."/>
            <person name="Ozersky P."/>
            <person name="Riley A."/>
            <person name="Strowmatt C."/>
            <person name="Wagner-McPherson C."/>
            <person name="Wollam A."/>
            <person name="Yoakum M."/>
            <person name="Bell M."/>
            <person name="Dedhia N."/>
            <person name="Parnell L."/>
            <person name="Shah R."/>
            <person name="Rodriguez M."/>
            <person name="Hoon See L."/>
            <person name="Vil D."/>
            <person name="Baker J."/>
            <person name="Kirchoff K."/>
            <person name="Toth K."/>
            <person name="King L."/>
            <person name="Bahret A."/>
            <person name="Miller B."/>
            <person name="Marra M.A."/>
            <person name="Martienssen R."/>
            <person name="McCombie W.R."/>
            <person name="Wilson R.K."/>
            <person name="Murphy G."/>
            <person name="Bancroft I."/>
            <person name="Volckaert G."/>
            <person name="Wambutt R."/>
            <person name="Duesterhoeft A."/>
            <person name="Stiekema W."/>
            <person name="Pohl T."/>
            <person name="Entian K.-D."/>
            <person name="Terryn N."/>
            <person name="Hartley N."/>
            <person name="Bent E."/>
            <person name="Johnson S."/>
            <person name="Langham S.-A."/>
            <person name="McCullagh B."/>
            <person name="Robben J."/>
            <person name="Grymonprez B."/>
            <person name="Zimmermann W."/>
            <person name="Ramsperger U."/>
            <person name="Wedler H."/>
            <person name="Balke K."/>
            <person name="Wedler E."/>
            <person name="Peters S."/>
            <person name="van Staveren M."/>
            <person name="Dirkse W."/>
            <person name="Mooijman P."/>
            <person name="Klein Lankhorst R."/>
            <person name="Weitzenegger T."/>
            <person name="Bothe G."/>
            <person name="Rose M."/>
            <person name="Hauf J."/>
            <person name="Berneiser S."/>
            <person name="Hempel S."/>
            <person name="Feldpausch M."/>
            <person name="Lamberth S."/>
            <person name="Villarroel R."/>
            <person name="Gielen J."/>
            <person name="Ardiles W."/>
            <person name="Bents O."/>
            <person name="Lemcke K."/>
            <person name="Kolesov G."/>
            <person name="Mayer K.F.X."/>
            <person name="Rudd S."/>
            <person name="Schoof H."/>
            <person name="Schueller C."/>
            <person name="Zaccaria P."/>
            <person name="Mewes H.-W."/>
            <person name="Bevan M."/>
            <person name="Fransz P.F."/>
        </authorList>
    </citation>
    <scope>NUCLEOTIDE SEQUENCE [LARGE SCALE GENOMIC DNA]</scope>
    <source>
        <strain>cv. Columbia</strain>
    </source>
</reference>
<reference key="2">
    <citation type="journal article" date="2017" name="Plant J.">
        <title>Araport11: a complete reannotation of the Arabidopsis thaliana reference genome.</title>
        <authorList>
            <person name="Cheng C.Y."/>
            <person name="Krishnakumar V."/>
            <person name="Chan A.P."/>
            <person name="Thibaud-Nissen F."/>
            <person name="Schobel S."/>
            <person name="Town C.D."/>
        </authorList>
    </citation>
    <scope>GENOME REANNOTATION</scope>
    <source>
        <strain>cv. Columbia</strain>
    </source>
</reference>
<reference key="3">
    <citation type="journal article" date="2003" name="Science">
        <title>Empirical analysis of transcriptional activity in the Arabidopsis genome.</title>
        <authorList>
            <person name="Yamada K."/>
            <person name="Lim J."/>
            <person name="Dale J.M."/>
            <person name="Chen H."/>
            <person name="Shinn P."/>
            <person name="Palm C.J."/>
            <person name="Southwick A.M."/>
            <person name="Wu H.C."/>
            <person name="Kim C.J."/>
            <person name="Nguyen M."/>
            <person name="Pham P.K."/>
            <person name="Cheuk R.F."/>
            <person name="Karlin-Newmann G."/>
            <person name="Liu S.X."/>
            <person name="Lam B."/>
            <person name="Sakano H."/>
            <person name="Wu T."/>
            <person name="Yu G."/>
            <person name="Miranda M."/>
            <person name="Quach H.L."/>
            <person name="Tripp M."/>
            <person name="Chang C.H."/>
            <person name="Lee J.M."/>
            <person name="Toriumi M.J."/>
            <person name="Chan M.M."/>
            <person name="Tang C.C."/>
            <person name="Onodera C.S."/>
            <person name="Deng J.M."/>
            <person name="Akiyama K."/>
            <person name="Ansari Y."/>
            <person name="Arakawa T."/>
            <person name="Banh J."/>
            <person name="Banno F."/>
            <person name="Bowser L."/>
            <person name="Brooks S.Y."/>
            <person name="Carninci P."/>
            <person name="Chao Q."/>
            <person name="Choy N."/>
            <person name="Enju A."/>
            <person name="Goldsmith A.D."/>
            <person name="Gurjal M."/>
            <person name="Hansen N.F."/>
            <person name="Hayashizaki Y."/>
            <person name="Johnson-Hopson C."/>
            <person name="Hsuan V.W."/>
            <person name="Iida K."/>
            <person name="Karnes M."/>
            <person name="Khan S."/>
            <person name="Koesema E."/>
            <person name="Ishida J."/>
            <person name="Jiang P.X."/>
            <person name="Jones T."/>
            <person name="Kawai J."/>
            <person name="Kamiya A."/>
            <person name="Meyers C."/>
            <person name="Nakajima M."/>
            <person name="Narusaka M."/>
            <person name="Seki M."/>
            <person name="Sakurai T."/>
            <person name="Satou M."/>
            <person name="Tamse R."/>
            <person name="Vaysberg M."/>
            <person name="Wallender E.K."/>
            <person name="Wong C."/>
            <person name="Yamamura Y."/>
            <person name="Yuan S."/>
            <person name="Shinozaki K."/>
            <person name="Davis R.W."/>
            <person name="Theologis A."/>
            <person name="Ecker J.R."/>
        </authorList>
    </citation>
    <scope>NUCLEOTIDE SEQUENCE [LARGE SCALE MRNA]</scope>
    <source>
        <strain>cv. Columbia</strain>
    </source>
</reference>
<reference key="4">
    <citation type="journal article" date="2016" name="Mol. Plant">
        <title>The brassinosteroid-activated BRI1 receptor kinase is switched off by dephosphorylation mediated by cytoplasm-localized PP2A B' subunits.</title>
        <authorList>
            <person name="Wang R."/>
            <person name="Liu M."/>
            <person name="Yuan M."/>
            <person name="Oses-Prieto J.A."/>
            <person name="Cai X."/>
            <person name="Sun Y."/>
            <person name="Burlingame A.L."/>
            <person name="Wang Z.Y."/>
            <person name="Tang W."/>
        </authorList>
    </citation>
    <scope>SUBCELLULAR LOCATION</scope>
    <scope>INDUCTION BY EPIBRASSINOLIDE</scope>
</reference>
<reference key="5">
    <citation type="journal article" date="2007" name="Trends Plant Sci.">
        <title>Arabidopsis PPP family of serine/threonine phosphatases.</title>
        <authorList>
            <person name="Farkas I."/>
            <person name="Dombradi V."/>
            <person name="Miskei M."/>
            <person name="Szabados L."/>
            <person name="Koncz C."/>
        </authorList>
    </citation>
    <scope>GENE FAMILY</scope>
    <scope>NOMENCLATURE</scope>
</reference>
<comment type="function">
    <text evidence="1">The B regulatory subunit may modulate substrate selectivity and catalytic activity, and may also direct the localization of the catalytic enzyme to a particular subcellular compartment.</text>
</comment>
<comment type="subunit">
    <text evidence="1">PP2A consists of a common heteromeric enzyme, composed of a catalytic subunit (subunits C), a constant regulatory subunit (subunit A), and a variety of regulatory subunits such as subunits B (the R2/B/PR55/B55, R3/B''/PR72/PR130/PR59 and R5/B'/B56 families).</text>
</comment>
<comment type="interaction">
    <interactant intactId="EBI-25517060">
        <id>Q93YV6</id>
    </interactant>
    <interactant intactId="EBI-25506855">
        <id>O23160</id>
        <label>MYB73</label>
    </interactant>
    <organismsDiffer>false</organismsDiffer>
    <experiments>3</experiments>
</comment>
<comment type="subcellular location">
    <subcellularLocation>
        <location evidence="3">Cytoplasm</location>
    </subcellularLocation>
</comment>
<comment type="induction">
    <text evidence="3">Induced by epibrassinolide.</text>
</comment>
<comment type="similarity">
    <text evidence="4">Belongs to the phosphatase 2A regulatory subunit B56 family.</text>
</comment>
<dbReference type="EMBL" id="AC006601">
    <property type="status" value="NOT_ANNOTATED_CDS"/>
    <property type="molecule type" value="Genomic_DNA"/>
</dbReference>
<dbReference type="EMBL" id="CP002688">
    <property type="protein sequence ID" value="AED93456.1"/>
    <property type="molecule type" value="Genomic_DNA"/>
</dbReference>
<dbReference type="EMBL" id="AY059748">
    <property type="protein sequence ID" value="AAL24096.1"/>
    <property type="molecule type" value="mRNA"/>
</dbReference>
<dbReference type="EMBL" id="AY142557">
    <property type="protein sequence ID" value="AAN13126.1"/>
    <property type="molecule type" value="mRNA"/>
</dbReference>
<dbReference type="RefSeq" id="NP_197933.1">
    <property type="nucleotide sequence ID" value="NM_122462.2"/>
</dbReference>
<dbReference type="SMR" id="Q93YV6"/>
<dbReference type="BioGRID" id="17901">
    <property type="interactions" value="4"/>
</dbReference>
<dbReference type="FunCoup" id="Q93YV6">
    <property type="interactions" value="4165"/>
</dbReference>
<dbReference type="IntAct" id="Q93YV6">
    <property type="interactions" value="1"/>
</dbReference>
<dbReference type="STRING" id="3702.Q93YV6"/>
<dbReference type="iPTMnet" id="Q93YV6"/>
<dbReference type="PaxDb" id="3702-AT5G25510.1"/>
<dbReference type="ProteomicsDB" id="245124"/>
<dbReference type="EnsemblPlants" id="AT5G25510.1">
    <property type="protein sequence ID" value="AT5G25510.1"/>
    <property type="gene ID" value="AT5G25510"/>
</dbReference>
<dbReference type="GeneID" id="832626"/>
<dbReference type="Gramene" id="AT5G25510.1">
    <property type="protein sequence ID" value="AT5G25510.1"/>
    <property type="gene ID" value="AT5G25510"/>
</dbReference>
<dbReference type="KEGG" id="ath:AT5G25510"/>
<dbReference type="Araport" id="AT5G25510"/>
<dbReference type="TAIR" id="AT5G25510"/>
<dbReference type="eggNOG" id="KOG2085">
    <property type="taxonomic scope" value="Eukaryota"/>
</dbReference>
<dbReference type="HOGENOM" id="CLU_012437_4_1_1"/>
<dbReference type="InParanoid" id="Q93YV6"/>
<dbReference type="OMA" id="MVPLFCR"/>
<dbReference type="PhylomeDB" id="Q93YV6"/>
<dbReference type="PRO" id="PR:Q93YV6"/>
<dbReference type="Proteomes" id="UP000006548">
    <property type="component" value="Chromosome 5"/>
</dbReference>
<dbReference type="ExpressionAtlas" id="Q93YV6">
    <property type="expression patterns" value="baseline and differential"/>
</dbReference>
<dbReference type="GO" id="GO:0005737">
    <property type="term" value="C:cytoplasm"/>
    <property type="evidence" value="ECO:0000314"/>
    <property type="project" value="UniProtKB"/>
</dbReference>
<dbReference type="GO" id="GO:0000159">
    <property type="term" value="C:protein phosphatase type 2A complex"/>
    <property type="evidence" value="ECO:0007669"/>
    <property type="project" value="InterPro"/>
</dbReference>
<dbReference type="GO" id="GO:0019888">
    <property type="term" value="F:protein phosphatase regulator activity"/>
    <property type="evidence" value="ECO:0007669"/>
    <property type="project" value="InterPro"/>
</dbReference>
<dbReference type="GO" id="GO:0007165">
    <property type="term" value="P:signal transduction"/>
    <property type="evidence" value="ECO:0007669"/>
    <property type="project" value="InterPro"/>
</dbReference>
<dbReference type="FunFam" id="1.25.10.10:FF:000041">
    <property type="entry name" value="Serine/threonine protein phosphatase 2A regulatory subunit"/>
    <property type="match status" value="1"/>
</dbReference>
<dbReference type="Gene3D" id="1.25.10.10">
    <property type="entry name" value="Leucine-rich Repeat Variant"/>
    <property type="match status" value="1"/>
</dbReference>
<dbReference type="InterPro" id="IPR011989">
    <property type="entry name" value="ARM-like"/>
</dbReference>
<dbReference type="InterPro" id="IPR016024">
    <property type="entry name" value="ARM-type_fold"/>
</dbReference>
<dbReference type="InterPro" id="IPR002554">
    <property type="entry name" value="PP2A_B56"/>
</dbReference>
<dbReference type="PANTHER" id="PTHR10257">
    <property type="entry name" value="SERINE/THREONINE PROTEIN PHOSPHATASE 2A PP2A REGULATORY SUBUNIT B"/>
    <property type="match status" value="1"/>
</dbReference>
<dbReference type="PANTHER" id="PTHR10257:SF59">
    <property type="entry name" value="SERINE_THREONINE PROTEIN PHOSPHATASE 2A 57 KDA REGULATORY SUBUNIT B' KAPPA ISOFORM"/>
    <property type="match status" value="1"/>
</dbReference>
<dbReference type="Pfam" id="PF01603">
    <property type="entry name" value="B56"/>
    <property type="match status" value="1"/>
</dbReference>
<dbReference type="PIRSF" id="PIRSF028043">
    <property type="entry name" value="PP2A_B56"/>
    <property type="match status" value="1"/>
</dbReference>
<dbReference type="SUPFAM" id="SSF48371">
    <property type="entry name" value="ARM repeat"/>
    <property type="match status" value="1"/>
</dbReference>
<organism>
    <name type="scientific">Arabidopsis thaliana</name>
    <name type="common">Mouse-ear cress</name>
    <dbReference type="NCBI Taxonomy" id="3702"/>
    <lineage>
        <taxon>Eukaryota</taxon>
        <taxon>Viridiplantae</taxon>
        <taxon>Streptophyta</taxon>
        <taxon>Embryophyta</taxon>
        <taxon>Tracheophyta</taxon>
        <taxon>Spermatophyta</taxon>
        <taxon>Magnoliopsida</taxon>
        <taxon>eudicotyledons</taxon>
        <taxon>Gunneridae</taxon>
        <taxon>Pentapetalae</taxon>
        <taxon>rosids</taxon>
        <taxon>malvids</taxon>
        <taxon>Brassicales</taxon>
        <taxon>Brassicaceae</taxon>
        <taxon>Camelineae</taxon>
        <taxon>Arabidopsis</taxon>
    </lineage>
</organism>
<sequence>MFKQFLSKLPRKSSKSDSGELNRSSSGPVSSPVQRSGTSGGGSGPVRSNSGKRMSSAVFPASVVAGIEPLVPFKDVPSSEKLNLFVSKVSLCCVTFDFSDPGKNSIEKDVKRQTLLELLDFVASGSVKFTEPAILAMCRMCAVNLFRVFPPNYRSSSGGENDDDEPMFDPAWPHLQIVYDLLLKFITSPCLDAKVAKKYLDHAFIVRLLDLFDSEDPRERECLKTILHRVYGKFMVHRPFVRKSMSNIFYRFVFETEKHSGIAELLEIFGSIVSGFALPLKEEHKIFLWRVLIPLHKPKSVGNYFQQLSYCITQFIDKEPKLGSVVIKGLLKFWPITNSQKEVMFLGEVEEIVEAMSVMEFQKIMVPLFLRIACCVTSSHFQVSERALFLWNNDQIVNLIGHNRQAILPIMFTALEKNAQNHWNQSVLNLTLNVRKMFCEMDEALFMSCHARFKEDEAKQCSAAEKRKEVWARLENAASMKPITGKTAVLVTPRATSIAC</sequence>